<gene>
    <name evidence="1" type="primary">ccmA</name>
    <name type="ordered locus">MS0601</name>
</gene>
<dbReference type="EC" id="7.6.2.5" evidence="1"/>
<dbReference type="EMBL" id="AE016827">
    <property type="protein sequence ID" value="AAU37208.1"/>
    <property type="molecule type" value="Genomic_DNA"/>
</dbReference>
<dbReference type="RefSeq" id="WP_011199780.1">
    <property type="nucleotide sequence ID" value="NC_006300.1"/>
</dbReference>
<dbReference type="SMR" id="Q65V02"/>
<dbReference type="STRING" id="221988.MS0601"/>
<dbReference type="KEGG" id="msu:MS0601"/>
<dbReference type="eggNOG" id="COG4133">
    <property type="taxonomic scope" value="Bacteria"/>
</dbReference>
<dbReference type="HOGENOM" id="CLU_000604_1_2_6"/>
<dbReference type="OrthoDB" id="9800654at2"/>
<dbReference type="Proteomes" id="UP000000607">
    <property type="component" value="Chromosome"/>
</dbReference>
<dbReference type="GO" id="GO:0005886">
    <property type="term" value="C:plasma membrane"/>
    <property type="evidence" value="ECO:0007669"/>
    <property type="project" value="UniProtKB-SubCell"/>
</dbReference>
<dbReference type="GO" id="GO:0015439">
    <property type="term" value="F:ABC-type heme transporter activity"/>
    <property type="evidence" value="ECO:0007669"/>
    <property type="project" value="UniProtKB-EC"/>
</dbReference>
<dbReference type="GO" id="GO:0005524">
    <property type="term" value="F:ATP binding"/>
    <property type="evidence" value="ECO:0007669"/>
    <property type="project" value="UniProtKB-KW"/>
</dbReference>
<dbReference type="GO" id="GO:0016887">
    <property type="term" value="F:ATP hydrolysis activity"/>
    <property type="evidence" value="ECO:0007669"/>
    <property type="project" value="InterPro"/>
</dbReference>
<dbReference type="GO" id="GO:0017004">
    <property type="term" value="P:cytochrome complex assembly"/>
    <property type="evidence" value="ECO:0007669"/>
    <property type="project" value="UniProtKB-KW"/>
</dbReference>
<dbReference type="Gene3D" id="3.40.50.300">
    <property type="entry name" value="P-loop containing nucleotide triphosphate hydrolases"/>
    <property type="match status" value="1"/>
</dbReference>
<dbReference type="InterPro" id="IPR003593">
    <property type="entry name" value="AAA+_ATPase"/>
</dbReference>
<dbReference type="InterPro" id="IPR003439">
    <property type="entry name" value="ABC_transporter-like_ATP-bd"/>
</dbReference>
<dbReference type="InterPro" id="IPR017871">
    <property type="entry name" value="ABC_transporter-like_CS"/>
</dbReference>
<dbReference type="InterPro" id="IPR005895">
    <property type="entry name" value="ABC_transptr_haem_export_CcmA"/>
</dbReference>
<dbReference type="InterPro" id="IPR027417">
    <property type="entry name" value="P-loop_NTPase"/>
</dbReference>
<dbReference type="NCBIfam" id="TIGR01189">
    <property type="entry name" value="ccmA"/>
    <property type="match status" value="1"/>
</dbReference>
<dbReference type="NCBIfam" id="NF010061">
    <property type="entry name" value="PRK13538.1"/>
    <property type="match status" value="1"/>
</dbReference>
<dbReference type="PANTHER" id="PTHR43499">
    <property type="entry name" value="ABC TRANSPORTER I FAMILY MEMBER 1"/>
    <property type="match status" value="1"/>
</dbReference>
<dbReference type="PANTHER" id="PTHR43499:SF1">
    <property type="entry name" value="ABC TRANSPORTER I FAMILY MEMBER 1"/>
    <property type="match status" value="1"/>
</dbReference>
<dbReference type="Pfam" id="PF00005">
    <property type="entry name" value="ABC_tran"/>
    <property type="match status" value="1"/>
</dbReference>
<dbReference type="SMART" id="SM00382">
    <property type="entry name" value="AAA"/>
    <property type="match status" value="1"/>
</dbReference>
<dbReference type="SUPFAM" id="SSF52540">
    <property type="entry name" value="P-loop containing nucleoside triphosphate hydrolases"/>
    <property type="match status" value="1"/>
</dbReference>
<dbReference type="PROSITE" id="PS00211">
    <property type="entry name" value="ABC_TRANSPORTER_1"/>
    <property type="match status" value="1"/>
</dbReference>
<dbReference type="PROSITE" id="PS50893">
    <property type="entry name" value="ABC_TRANSPORTER_2"/>
    <property type="match status" value="1"/>
</dbReference>
<dbReference type="PROSITE" id="PS51243">
    <property type="entry name" value="CCMA"/>
    <property type="match status" value="1"/>
</dbReference>
<evidence type="ECO:0000255" key="1">
    <source>
        <dbReference type="HAMAP-Rule" id="MF_01707"/>
    </source>
</evidence>
<protein>
    <recommendedName>
        <fullName evidence="1">Cytochrome c biogenesis ATP-binding export protein CcmA</fullName>
        <ecNumber evidence="1">7.6.2.5</ecNumber>
    </recommendedName>
    <alternativeName>
        <fullName evidence="1">Heme exporter protein A</fullName>
    </alternativeName>
</protein>
<proteinExistence type="inferred from homology"/>
<name>CCMA_MANSM</name>
<feature type="chain" id="PRO_0000092188" description="Cytochrome c biogenesis ATP-binding export protein CcmA">
    <location>
        <begin position="1"/>
        <end position="215"/>
    </location>
</feature>
<feature type="domain" description="ABC transporter" evidence="1">
    <location>
        <begin position="7"/>
        <end position="209"/>
    </location>
</feature>
<feature type="binding site" evidence="1">
    <location>
        <begin position="39"/>
        <end position="46"/>
    </location>
    <ligand>
        <name>ATP</name>
        <dbReference type="ChEBI" id="CHEBI:30616"/>
    </ligand>
</feature>
<organism>
    <name type="scientific">Mannheimia succiniciproducens (strain KCTC 0769BP / MBEL55E)</name>
    <dbReference type="NCBI Taxonomy" id="221988"/>
    <lineage>
        <taxon>Bacteria</taxon>
        <taxon>Pseudomonadati</taxon>
        <taxon>Pseudomonadota</taxon>
        <taxon>Gammaproteobacteria</taxon>
        <taxon>Pasteurellales</taxon>
        <taxon>Pasteurellaceae</taxon>
        <taxon>Basfia</taxon>
    </lineage>
</organism>
<reference key="1">
    <citation type="journal article" date="2004" name="Nat. Biotechnol.">
        <title>The genome sequence of the capnophilic rumen bacterium Mannheimia succiniciproducens.</title>
        <authorList>
            <person name="Hong S.H."/>
            <person name="Kim J.S."/>
            <person name="Lee S.Y."/>
            <person name="In Y.H."/>
            <person name="Choi S.S."/>
            <person name="Rih J.-K."/>
            <person name="Kim C.H."/>
            <person name="Jeong H."/>
            <person name="Hur C.G."/>
            <person name="Kim J.J."/>
        </authorList>
    </citation>
    <scope>NUCLEOTIDE SEQUENCE [LARGE SCALE GENOMIC DNA]</scope>
    <source>
        <strain>KCTC 0769BP / MBEL55E</strain>
    </source>
</reference>
<accession>Q65V02</accession>
<keyword id="KW-0067">ATP-binding</keyword>
<keyword id="KW-0997">Cell inner membrane</keyword>
<keyword id="KW-1003">Cell membrane</keyword>
<keyword id="KW-0201">Cytochrome c-type biogenesis</keyword>
<keyword id="KW-0472">Membrane</keyword>
<keyword id="KW-0547">Nucleotide-binding</keyword>
<keyword id="KW-1278">Translocase</keyword>
<keyword id="KW-0813">Transport</keyword>
<comment type="function">
    <text evidence="1">Part of the ABC transporter complex CcmAB involved in the biogenesis of c-type cytochromes; once thought to export heme, this seems not to be the case, but its exact role is uncertain. Responsible for energy coupling to the transport system.</text>
</comment>
<comment type="catalytic activity">
    <reaction evidence="1">
        <text>heme b(in) + ATP + H2O = heme b(out) + ADP + phosphate + H(+)</text>
        <dbReference type="Rhea" id="RHEA:19261"/>
        <dbReference type="ChEBI" id="CHEBI:15377"/>
        <dbReference type="ChEBI" id="CHEBI:15378"/>
        <dbReference type="ChEBI" id="CHEBI:30616"/>
        <dbReference type="ChEBI" id="CHEBI:43474"/>
        <dbReference type="ChEBI" id="CHEBI:60344"/>
        <dbReference type="ChEBI" id="CHEBI:456216"/>
        <dbReference type="EC" id="7.6.2.5"/>
    </reaction>
</comment>
<comment type="subunit">
    <text evidence="1">The complex is composed of two ATP-binding proteins (CcmA) and two transmembrane proteins (CcmB).</text>
</comment>
<comment type="subcellular location">
    <subcellularLocation>
        <location evidence="1">Cell inner membrane</location>
        <topology evidence="1">Peripheral membrane protein</topology>
    </subcellularLocation>
</comment>
<comment type="similarity">
    <text evidence="1">Belongs to the ABC transporter superfamily. CcmA exporter (TC 3.A.1.107) family.</text>
</comment>
<sequence length="215" mass="24165">MQSVNQLKIDRLACQRGDKILFTDLSFNLQSGDFVQIEGHNGIGKTSLLRILAGLAQPLSGKVRWNSEEISKCREEYYYDLLYLGHHAGIKPELTAWENLKFYQQAGHCRQGDEILWNVLEKVGLLGREDIVASQLSAGQQKRIALARLWISQAPLWILDEPFNAIDKNGVKVLTGLFEQQAEKGGIVILTSHQEVPSSALTVLNLAQYKFTDNE</sequence>